<dbReference type="EMBL" id="AB112358">
    <property type="protein sequence ID" value="BAC77654.1"/>
    <property type="molecule type" value="mRNA"/>
</dbReference>
<dbReference type="SMR" id="Q7T2Q6"/>
<dbReference type="GO" id="GO:0005576">
    <property type="term" value="C:extracellular region"/>
    <property type="evidence" value="ECO:0007669"/>
    <property type="project" value="UniProtKB-SubCell"/>
</dbReference>
<dbReference type="GO" id="GO:0004867">
    <property type="term" value="F:serine-type endopeptidase inhibitor activity"/>
    <property type="evidence" value="ECO:0007669"/>
    <property type="project" value="InterPro"/>
</dbReference>
<dbReference type="GO" id="GO:0090729">
    <property type="term" value="F:toxin activity"/>
    <property type="evidence" value="ECO:0007669"/>
    <property type="project" value="UniProtKB-KW"/>
</dbReference>
<dbReference type="CDD" id="cd22619">
    <property type="entry name" value="Kunitz_B2B"/>
    <property type="match status" value="1"/>
</dbReference>
<dbReference type="Gene3D" id="4.10.410.10">
    <property type="entry name" value="Pancreatic trypsin inhibitor Kunitz domain"/>
    <property type="match status" value="1"/>
</dbReference>
<dbReference type="InterPro" id="IPR002223">
    <property type="entry name" value="Kunitz_BPTI"/>
</dbReference>
<dbReference type="InterPro" id="IPR036880">
    <property type="entry name" value="Kunitz_BPTI_sf"/>
</dbReference>
<dbReference type="InterPro" id="IPR020901">
    <property type="entry name" value="Prtase_inh_Kunz-CS"/>
</dbReference>
<dbReference type="InterPro" id="IPR050098">
    <property type="entry name" value="TFPI/VKTCI-like"/>
</dbReference>
<dbReference type="PANTHER" id="PTHR10083:SF374">
    <property type="entry name" value="BPTI_KUNITZ INHIBITOR DOMAIN-CONTAINING PROTEIN"/>
    <property type="match status" value="1"/>
</dbReference>
<dbReference type="PANTHER" id="PTHR10083">
    <property type="entry name" value="KUNITZ-TYPE PROTEASE INHIBITOR-RELATED"/>
    <property type="match status" value="1"/>
</dbReference>
<dbReference type="Pfam" id="PF00014">
    <property type="entry name" value="Kunitz_BPTI"/>
    <property type="match status" value="1"/>
</dbReference>
<dbReference type="PRINTS" id="PR00759">
    <property type="entry name" value="BASICPTASE"/>
</dbReference>
<dbReference type="SMART" id="SM00131">
    <property type="entry name" value="KU"/>
    <property type="match status" value="1"/>
</dbReference>
<dbReference type="SUPFAM" id="SSF57362">
    <property type="entry name" value="BPTI-like"/>
    <property type="match status" value="1"/>
</dbReference>
<dbReference type="PROSITE" id="PS00280">
    <property type="entry name" value="BPTI_KUNITZ_1"/>
    <property type="match status" value="1"/>
</dbReference>
<dbReference type="PROSITE" id="PS50279">
    <property type="entry name" value="BPTI_KUNITZ_2"/>
    <property type="match status" value="1"/>
</dbReference>
<accession>Q7T2Q6</accession>
<protein>
    <recommendedName>
        <fullName>Kunitz-type serine protease inhibitor homolog beta-bungarotoxin B chain</fullName>
    </recommendedName>
</protein>
<sequence length="83" mass="9334">MSSGSLLLLLGLLTLLAELTPVSSRKRHPDCDKPPNKKRCTGHIPAFYYNPQRKTCERFSYGGCKGNGNHFKTPQLCMCHCHE</sequence>
<evidence type="ECO:0000255" key="1">
    <source>
        <dbReference type="PROSITE-ProRule" id="PRU00031"/>
    </source>
</evidence>
<evidence type="ECO:0000269" key="2">
    <source>
    </source>
</evidence>
<evidence type="ECO:0000269" key="3">
    <source>
    </source>
</evidence>
<evidence type="ECO:0000305" key="4"/>
<name>VKTHB_BUNFL</name>
<organism>
    <name type="scientific">Bungarus flaviceps flaviceps</name>
    <name type="common">Red-headed krait</name>
    <dbReference type="NCBI Taxonomy" id="8615"/>
    <lineage>
        <taxon>Eukaryota</taxon>
        <taxon>Metazoa</taxon>
        <taxon>Chordata</taxon>
        <taxon>Craniata</taxon>
        <taxon>Vertebrata</taxon>
        <taxon>Euteleostomi</taxon>
        <taxon>Lepidosauria</taxon>
        <taxon>Squamata</taxon>
        <taxon>Bifurcata</taxon>
        <taxon>Unidentata</taxon>
        <taxon>Episquamata</taxon>
        <taxon>Toxicofera</taxon>
        <taxon>Serpentes</taxon>
        <taxon>Colubroidea</taxon>
        <taxon>Elapidae</taxon>
        <taxon>Bungarinae</taxon>
        <taxon>Bungarus</taxon>
    </lineage>
</organism>
<proteinExistence type="evidence at protein level"/>
<reference key="1">
    <citation type="journal article" date="2006" name="Toxicon">
        <title>Molecular cloning of the major lethal toxins from two kraits (Bungarus flaviceps and Bungarus candidus).</title>
        <authorList>
            <person name="Yanoshita R."/>
            <person name="Ogawa Y."/>
            <person name="Murayama N."/>
            <person name="Omori-Satoh T."/>
            <person name="Saguchi K."/>
            <person name="Higuchi S."/>
            <person name="Khow O."/>
            <person name="Chanhome L."/>
            <person name="Samejima Y."/>
            <person name="Sitprija V."/>
        </authorList>
    </citation>
    <scope>NUCLEOTIDE SEQUENCE [MRNA]</scope>
    <scope>PROTEIN SEQUENCE OF 25-50</scope>
    <scope>SUBUNIT</scope>
    <scope>IDENTIFICATION BY MASS SPECTROMETRY</scope>
    <source>
        <tissue>Venom gland</tissue>
    </source>
</reference>
<reference key="2">
    <citation type="journal article" date="2002" name="Toxicon">
        <title>Isolation of the major lethal toxin in the venom of Bungarus flaviceps.</title>
        <authorList>
            <person name="Khow O."/>
            <person name="Chanhome L."/>
            <person name="Omori-Satoh T."/>
            <person name="Sitprija V."/>
        </authorList>
    </citation>
    <scope>FUNCTION</scope>
    <scope>SUBUNIT</scope>
    <source>
        <tissue>Venom</tissue>
    </source>
</reference>
<keyword id="KW-0903">Direct protein sequencing</keyword>
<keyword id="KW-1015">Disulfide bond</keyword>
<keyword id="KW-0528">Neurotoxin</keyword>
<keyword id="KW-0638">Presynaptic neurotoxin</keyword>
<keyword id="KW-0964">Secreted</keyword>
<keyword id="KW-0732">Signal</keyword>
<keyword id="KW-0800">Toxin</keyword>
<feature type="signal peptide" evidence="3">
    <location>
        <begin position="1"/>
        <end position="24"/>
    </location>
</feature>
<feature type="chain" id="PRO_5000050834" description="Kunitz-type serine protease inhibitor homolog beta-bungarotoxin B chain">
    <location>
        <begin position="25"/>
        <end position="83"/>
    </location>
</feature>
<feature type="domain" description="BPTI/Kunitz inhibitor" evidence="1">
    <location>
        <begin position="31"/>
        <end position="81"/>
    </location>
</feature>
<feature type="disulfide bond" evidence="1">
    <location>
        <begin position="31"/>
        <end position="81"/>
    </location>
</feature>
<feature type="disulfide bond" evidence="1">
    <location>
        <begin position="40"/>
        <end position="64"/>
    </location>
</feature>
<feature type="disulfide bond" evidence="1">
    <location>
        <begin position="56"/>
        <end position="77"/>
    </location>
</feature>
<feature type="disulfide bond" description="Interchain (with an A chain)" evidence="1">
    <location>
        <position position="79"/>
    </location>
</feature>
<comment type="function">
    <text evidence="2">Beta-bungarotoxin is a presynaptic neurotoxin of the venom. The B chain is homologous to venom basic protease inhibitors but has no protease inhibitor activity and is non-toxic.</text>
</comment>
<comment type="subunit">
    <text evidence="2 3">Heterodimer with beta-bungarotoxin A1 chain; disulfide-linked. The A chain has phospholipase A2 activity and the B chain shows homology with the basic protease inhibitors.</text>
</comment>
<comment type="subcellular location">
    <subcellularLocation>
        <location>Secreted</location>
    </subcellularLocation>
</comment>
<comment type="tissue specificity">
    <text>Expressed by the venom gland.</text>
</comment>
<comment type="similarity">
    <text evidence="4">Belongs to the venom Kunitz-type family.</text>
</comment>